<keyword id="KW-0067">ATP-binding</keyword>
<keyword id="KW-0436">Ligase</keyword>
<keyword id="KW-0547">Nucleotide-binding</keyword>
<keyword id="KW-0648">Protein biosynthesis</keyword>
<keyword id="KW-1185">Reference proteome</keyword>
<evidence type="ECO:0000255" key="1">
    <source>
        <dbReference type="HAMAP-Rule" id="MF_00121"/>
    </source>
</evidence>
<feature type="chain" id="PRO_0000241203" description="Aspartyl/glutamyl-tRNA(Asn/Gln) amidotransferase subunit B">
    <location>
        <begin position="1"/>
        <end position="490"/>
    </location>
</feature>
<proteinExistence type="inferred from homology"/>
<reference key="1">
    <citation type="journal article" date="2004" name="Proc. Natl. Acad. Sci. U.S.A.">
        <title>Genomic plasticity of the causative agent of melioidosis, Burkholderia pseudomallei.</title>
        <authorList>
            <person name="Holden M.T.G."/>
            <person name="Titball R.W."/>
            <person name="Peacock S.J."/>
            <person name="Cerdeno-Tarraga A.-M."/>
            <person name="Atkins T."/>
            <person name="Crossman L.C."/>
            <person name="Pitt T."/>
            <person name="Churcher C."/>
            <person name="Mungall K.L."/>
            <person name="Bentley S.D."/>
            <person name="Sebaihia M."/>
            <person name="Thomson N.R."/>
            <person name="Bason N."/>
            <person name="Beacham I.R."/>
            <person name="Brooks K."/>
            <person name="Brown K.A."/>
            <person name="Brown N.F."/>
            <person name="Challis G.L."/>
            <person name="Cherevach I."/>
            <person name="Chillingworth T."/>
            <person name="Cronin A."/>
            <person name="Crossett B."/>
            <person name="Davis P."/>
            <person name="DeShazer D."/>
            <person name="Feltwell T."/>
            <person name="Fraser A."/>
            <person name="Hance Z."/>
            <person name="Hauser H."/>
            <person name="Holroyd S."/>
            <person name="Jagels K."/>
            <person name="Keith K.E."/>
            <person name="Maddison M."/>
            <person name="Moule S."/>
            <person name="Price C."/>
            <person name="Quail M.A."/>
            <person name="Rabbinowitsch E."/>
            <person name="Rutherford K."/>
            <person name="Sanders M."/>
            <person name="Simmonds M."/>
            <person name="Songsivilai S."/>
            <person name="Stevens K."/>
            <person name="Tumapa S."/>
            <person name="Vesaratchavest M."/>
            <person name="Whitehead S."/>
            <person name="Yeats C."/>
            <person name="Barrell B.G."/>
            <person name="Oyston P.C.F."/>
            <person name="Parkhill J."/>
        </authorList>
    </citation>
    <scope>NUCLEOTIDE SEQUENCE [LARGE SCALE GENOMIC DNA]</scope>
    <source>
        <strain>K96243</strain>
    </source>
</reference>
<gene>
    <name evidence="1" type="primary">gatB</name>
    <name type="ordered locus">BPSL0189</name>
</gene>
<comment type="function">
    <text evidence="1">Allows the formation of correctly charged Asn-tRNA(Asn) or Gln-tRNA(Gln) through the transamidation of misacylated Asp-tRNA(Asn) or Glu-tRNA(Gln) in organisms which lack either or both of asparaginyl-tRNA or glutaminyl-tRNA synthetases. The reaction takes place in the presence of glutamine and ATP through an activated phospho-Asp-tRNA(Asn) or phospho-Glu-tRNA(Gln).</text>
</comment>
<comment type="catalytic activity">
    <reaction evidence="1">
        <text>L-glutamyl-tRNA(Gln) + L-glutamine + ATP + H2O = L-glutaminyl-tRNA(Gln) + L-glutamate + ADP + phosphate + H(+)</text>
        <dbReference type="Rhea" id="RHEA:17521"/>
        <dbReference type="Rhea" id="RHEA-COMP:9681"/>
        <dbReference type="Rhea" id="RHEA-COMP:9684"/>
        <dbReference type="ChEBI" id="CHEBI:15377"/>
        <dbReference type="ChEBI" id="CHEBI:15378"/>
        <dbReference type="ChEBI" id="CHEBI:29985"/>
        <dbReference type="ChEBI" id="CHEBI:30616"/>
        <dbReference type="ChEBI" id="CHEBI:43474"/>
        <dbReference type="ChEBI" id="CHEBI:58359"/>
        <dbReference type="ChEBI" id="CHEBI:78520"/>
        <dbReference type="ChEBI" id="CHEBI:78521"/>
        <dbReference type="ChEBI" id="CHEBI:456216"/>
    </reaction>
</comment>
<comment type="catalytic activity">
    <reaction evidence="1">
        <text>L-aspartyl-tRNA(Asn) + L-glutamine + ATP + H2O = L-asparaginyl-tRNA(Asn) + L-glutamate + ADP + phosphate + 2 H(+)</text>
        <dbReference type="Rhea" id="RHEA:14513"/>
        <dbReference type="Rhea" id="RHEA-COMP:9674"/>
        <dbReference type="Rhea" id="RHEA-COMP:9677"/>
        <dbReference type="ChEBI" id="CHEBI:15377"/>
        <dbReference type="ChEBI" id="CHEBI:15378"/>
        <dbReference type="ChEBI" id="CHEBI:29985"/>
        <dbReference type="ChEBI" id="CHEBI:30616"/>
        <dbReference type="ChEBI" id="CHEBI:43474"/>
        <dbReference type="ChEBI" id="CHEBI:58359"/>
        <dbReference type="ChEBI" id="CHEBI:78515"/>
        <dbReference type="ChEBI" id="CHEBI:78516"/>
        <dbReference type="ChEBI" id="CHEBI:456216"/>
    </reaction>
</comment>
<comment type="subunit">
    <text evidence="1">Heterotrimer of A, B and C subunits.</text>
</comment>
<comment type="similarity">
    <text evidence="1">Belongs to the GatB/GatE family. GatB subfamily.</text>
</comment>
<dbReference type="EC" id="6.3.5.-" evidence="1"/>
<dbReference type="EMBL" id="BX571965">
    <property type="protein sequence ID" value="CAH34176.1"/>
    <property type="molecule type" value="Genomic_DNA"/>
</dbReference>
<dbReference type="RefSeq" id="WP_004552444.1">
    <property type="nucleotide sequence ID" value="NZ_CP009538.1"/>
</dbReference>
<dbReference type="RefSeq" id="YP_106817.1">
    <property type="nucleotide sequence ID" value="NC_006350.1"/>
</dbReference>
<dbReference type="SMR" id="Q63YJ8"/>
<dbReference type="STRING" id="272560.BPSL0189"/>
<dbReference type="KEGG" id="bps:BPSL0189"/>
<dbReference type="PATRIC" id="fig|272560.51.peg.1530"/>
<dbReference type="eggNOG" id="COG0064">
    <property type="taxonomic scope" value="Bacteria"/>
</dbReference>
<dbReference type="Proteomes" id="UP000000605">
    <property type="component" value="Chromosome 1"/>
</dbReference>
<dbReference type="GO" id="GO:0050566">
    <property type="term" value="F:asparaginyl-tRNA synthase (glutamine-hydrolyzing) activity"/>
    <property type="evidence" value="ECO:0007669"/>
    <property type="project" value="RHEA"/>
</dbReference>
<dbReference type="GO" id="GO:0005524">
    <property type="term" value="F:ATP binding"/>
    <property type="evidence" value="ECO:0007669"/>
    <property type="project" value="UniProtKB-KW"/>
</dbReference>
<dbReference type="GO" id="GO:0050567">
    <property type="term" value="F:glutaminyl-tRNA synthase (glutamine-hydrolyzing) activity"/>
    <property type="evidence" value="ECO:0007669"/>
    <property type="project" value="UniProtKB-UniRule"/>
</dbReference>
<dbReference type="GO" id="GO:0070681">
    <property type="term" value="P:glutaminyl-tRNAGln biosynthesis via transamidation"/>
    <property type="evidence" value="ECO:0007669"/>
    <property type="project" value="TreeGrafter"/>
</dbReference>
<dbReference type="GO" id="GO:0006412">
    <property type="term" value="P:translation"/>
    <property type="evidence" value="ECO:0007669"/>
    <property type="project" value="UniProtKB-UniRule"/>
</dbReference>
<dbReference type="FunFam" id="1.10.10.410:FF:000001">
    <property type="entry name" value="Aspartyl/glutamyl-tRNA(Asn/Gln) amidotransferase subunit B"/>
    <property type="match status" value="1"/>
</dbReference>
<dbReference type="FunFam" id="1.10.150.380:FF:000001">
    <property type="entry name" value="Aspartyl/glutamyl-tRNA(Asn/Gln) amidotransferase subunit B"/>
    <property type="match status" value="1"/>
</dbReference>
<dbReference type="Gene3D" id="1.10.10.410">
    <property type="match status" value="1"/>
</dbReference>
<dbReference type="Gene3D" id="1.10.150.380">
    <property type="entry name" value="GatB domain, N-terminal subdomain"/>
    <property type="match status" value="1"/>
</dbReference>
<dbReference type="HAMAP" id="MF_00121">
    <property type="entry name" value="GatB"/>
    <property type="match status" value="1"/>
</dbReference>
<dbReference type="InterPro" id="IPR017959">
    <property type="entry name" value="Asn/Gln-tRNA_amidoTrfase_suB/E"/>
</dbReference>
<dbReference type="InterPro" id="IPR006075">
    <property type="entry name" value="Asn/Gln-tRNA_Trfase_suB/E_cat"/>
</dbReference>
<dbReference type="InterPro" id="IPR018027">
    <property type="entry name" value="Asn/Gln_amidotransferase"/>
</dbReference>
<dbReference type="InterPro" id="IPR003789">
    <property type="entry name" value="Asn/Gln_tRNA_amidoTrase-B-like"/>
</dbReference>
<dbReference type="InterPro" id="IPR004413">
    <property type="entry name" value="GatB"/>
</dbReference>
<dbReference type="InterPro" id="IPR042114">
    <property type="entry name" value="GatB_C_1"/>
</dbReference>
<dbReference type="InterPro" id="IPR023168">
    <property type="entry name" value="GatB_Yqey_C_2"/>
</dbReference>
<dbReference type="InterPro" id="IPR017958">
    <property type="entry name" value="Gln-tRNA_amidoTrfase_suB_CS"/>
</dbReference>
<dbReference type="InterPro" id="IPR014746">
    <property type="entry name" value="Gln_synth/guanido_kin_cat_dom"/>
</dbReference>
<dbReference type="NCBIfam" id="TIGR00133">
    <property type="entry name" value="gatB"/>
    <property type="match status" value="1"/>
</dbReference>
<dbReference type="NCBIfam" id="NF004012">
    <property type="entry name" value="PRK05477.1-2"/>
    <property type="match status" value="1"/>
</dbReference>
<dbReference type="NCBIfam" id="NF004014">
    <property type="entry name" value="PRK05477.1-4"/>
    <property type="match status" value="1"/>
</dbReference>
<dbReference type="NCBIfam" id="NF004015">
    <property type="entry name" value="PRK05477.1-5"/>
    <property type="match status" value="1"/>
</dbReference>
<dbReference type="PANTHER" id="PTHR11659">
    <property type="entry name" value="GLUTAMYL-TRNA GLN AMIDOTRANSFERASE SUBUNIT B MITOCHONDRIAL AND PROKARYOTIC PET112-RELATED"/>
    <property type="match status" value="1"/>
</dbReference>
<dbReference type="PANTHER" id="PTHR11659:SF0">
    <property type="entry name" value="GLUTAMYL-TRNA(GLN) AMIDOTRANSFERASE SUBUNIT B, MITOCHONDRIAL"/>
    <property type="match status" value="1"/>
</dbReference>
<dbReference type="Pfam" id="PF02934">
    <property type="entry name" value="GatB_N"/>
    <property type="match status" value="1"/>
</dbReference>
<dbReference type="Pfam" id="PF02637">
    <property type="entry name" value="GatB_Yqey"/>
    <property type="match status" value="1"/>
</dbReference>
<dbReference type="SMART" id="SM00845">
    <property type="entry name" value="GatB_Yqey"/>
    <property type="match status" value="1"/>
</dbReference>
<dbReference type="SUPFAM" id="SSF89095">
    <property type="entry name" value="GatB/YqeY motif"/>
    <property type="match status" value="1"/>
</dbReference>
<dbReference type="SUPFAM" id="SSF55931">
    <property type="entry name" value="Glutamine synthetase/guanido kinase"/>
    <property type="match status" value="1"/>
</dbReference>
<dbReference type="PROSITE" id="PS01234">
    <property type="entry name" value="GATB"/>
    <property type="match status" value="1"/>
</dbReference>
<sequence length="490" mass="53337">MTQWEVVIGLETHAQLSTVSKIFSGASTQFGAQPNTQACPVDLALPGVLPVLNRGAVERAIRFGLAIGATVAPRSVFARKNYFYPDLPKGYQISQYEIPVVQGGQITIQVPANEKAGKQAYSKTVNLTRAHLEEDAGKSLHEDFAGMTGIDLNRAGTPLLEIVTEPEMRSAAEAVAYAKALHGLVMWLGICDGNMQEGSFRCDANVSVRPVGQEKFGTRAEIKNLNSFRFLEDAINYEVRRQIELIEDGGEVVQETRLYDPDKRETRSMRSKEDAHDYRYFPDPDLMPLVIGADWIARVKGEMPELPAAMQQRFIEQYGVSAYDAGVLTSTKAMAEYFEALVAKAGAANAKLAANWLMGDVSSQLNRDGIDIDACPVSAAQLALVLQRIADGTISNKIAKEIFVTIWDEKAADEGAADRIIEAKGLKQISDTGALEAIIDEVLAANAKSVEEFRAGKDKAFNALVGQAMKATKGKANPQQVNELLKKKLG</sequence>
<organism>
    <name type="scientific">Burkholderia pseudomallei (strain K96243)</name>
    <dbReference type="NCBI Taxonomy" id="272560"/>
    <lineage>
        <taxon>Bacteria</taxon>
        <taxon>Pseudomonadati</taxon>
        <taxon>Pseudomonadota</taxon>
        <taxon>Betaproteobacteria</taxon>
        <taxon>Burkholderiales</taxon>
        <taxon>Burkholderiaceae</taxon>
        <taxon>Burkholderia</taxon>
        <taxon>pseudomallei group</taxon>
    </lineage>
</organism>
<name>GATB_BURPS</name>
<accession>Q63YJ8</accession>
<protein>
    <recommendedName>
        <fullName evidence="1">Aspartyl/glutamyl-tRNA(Asn/Gln) amidotransferase subunit B</fullName>
        <shortName evidence="1">Asp/Glu-ADT subunit B</shortName>
        <ecNumber evidence="1">6.3.5.-</ecNumber>
    </recommendedName>
</protein>